<accession>A5U2V7</accession>
<proteinExistence type="inferred from homology"/>
<dbReference type="EC" id="4.2.1.19" evidence="1"/>
<dbReference type="EMBL" id="CP000611">
    <property type="protein sequence ID" value="ABQ73357.1"/>
    <property type="molecule type" value="Genomic_DNA"/>
</dbReference>
<dbReference type="RefSeq" id="WP_003407950.1">
    <property type="nucleotide sequence ID" value="NZ_CP016972.1"/>
</dbReference>
<dbReference type="SMR" id="A5U2V7"/>
<dbReference type="KEGG" id="mra:MRA_1611"/>
<dbReference type="eggNOG" id="COG0131">
    <property type="taxonomic scope" value="Bacteria"/>
</dbReference>
<dbReference type="HOGENOM" id="CLU_044308_3_0_11"/>
<dbReference type="UniPathway" id="UPA00031">
    <property type="reaction ID" value="UER00011"/>
</dbReference>
<dbReference type="Proteomes" id="UP000001988">
    <property type="component" value="Chromosome"/>
</dbReference>
<dbReference type="GO" id="GO:0005737">
    <property type="term" value="C:cytoplasm"/>
    <property type="evidence" value="ECO:0007669"/>
    <property type="project" value="UniProtKB-SubCell"/>
</dbReference>
<dbReference type="GO" id="GO:0004424">
    <property type="term" value="F:imidazoleglycerol-phosphate dehydratase activity"/>
    <property type="evidence" value="ECO:0007669"/>
    <property type="project" value="UniProtKB-UniRule"/>
</dbReference>
<dbReference type="GO" id="GO:0000105">
    <property type="term" value="P:L-histidine biosynthetic process"/>
    <property type="evidence" value="ECO:0007669"/>
    <property type="project" value="UniProtKB-UniRule"/>
</dbReference>
<dbReference type="CDD" id="cd07914">
    <property type="entry name" value="IGPD"/>
    <property type="match status" value="1"/>
</dbReference>
<dbReference type="FunFam" id="3.30.230.40:FF:000001">
    <property type="entry name" value="Imidazoleglycerol-phosphate dehydratase HisB"/>
    <property type="match status" value="1"/>
</dbReference>
<dbReference type="FunFam" id="3.30.230.40:FF:000003">
    <property type="entry name" value="Imidazoleglycerol-phosphate dehydratase HisB"/>
    <property type="match status" value="1"/>
</dbReference>
<dbReference type="Gene3D" id="3.30.230.40">
    <property type="entry name" value="Imidazole glycerol phosphate dehydratase, domain 1"/>
    <property type="match status" value="2"/>
</dbReference>
<dbReference type="HAMAP" id="MF_00076">
    <property type="entry name" value="HisB"/>
    <property type="match status" value="1"/>
</dbReference>
<dbReference type="InterPro" id="IPR038494">
    <property type="entry name" value="IGPD_sf"/>
</dbReference>
<dbReference type="InterPro" id="IPR000807">
    <property type="entry name" value="ImidazoleglycerolP_deHydtase"/>
</dbReference>
<dbReference type="InterPro" id="IPR020565">
    <property type="entry name" value="ImidazoleglycerP_deHydtase_CS"/>
</dbReference>
<dbReference type="InterPro" id="IPR020568">
    <property type="entry name" value="Ribosomal_Su5_D2-typ_SF"/>
</dbReference>
<dbReference type="NCBIfam" id="NF002110">
    <property type="entry name" value="PRK00951.1-6"/>
    <property type="match status" value="1"/>
</dbReference>
<dbReference type="NCBIfam" id="NF002111">
    <property type="entry name" value="PRK00951.2-1"/>
    <property type="match status" value="1"/>
</dbReference>
<dbReference type="NCBIfam" id="NF002114">
    <property type="entry name" value="PRK00951.2-4"/>
    <property type="match status" value="1"/>
</dbReference>
<dbReference type="PANTHER" id="PTHR23133:SF2">
    <property type="entry name" value="IMIDAZOLEGLYCEROL-PHOSPHATE DEHYDRATASE"/>
    <property type="match status" value="1"/>
</dbReference>
<dbReference type="PANTHER" id="PTHR23133">
    <property type="entry name" value="IMIDAZOLEGLYCEROL-PHOSPHATE DEHYDRATASE HIS7"/>
    <property type="match status" value="1"/>
</dbReference>
<dbReference type="Pfam" id="PF00475">
    <property type="entry name" value="IGPD"/>
    <property type="match status" value="1"/>
</dbReference>
<dbReference type="SUPFAM" id="SSF54211">
    <property type="entry name" value="Ribosomal protein S5 domain 2-like"/>
    <property type="match status" value="2"/>
</dbReference>
<dbReference type="PROSITE" id="PS00954">
    <property type="entry name" value="IGP_DEHYDRATASE_1"/>
    <property type="match status" value="1"/>
</dbReference>
<dbReference type="PROSITE" id="PS00955">
    <property type="entry name" value="IGP_DEHYDRATASE_2"/>
    <property type="match status" value="1"/>
</dbReference>
<keyword id="KW-0028">Amino-acid biosynthesis</keyword>
<keyword id="KW-0963">Cytoplasm</keyword>
<keyword id="KW-0368">Histidine biosynthesis</keyword>
<keyword id="KW-0456">Lyase</keyword>
<keyword id="KW-1185">Reference proteome</keyword>
<feature type="chain" id="PRO_1000010305" description="Imidazoleglycerol-phosphate dehydratase">
    <location>
        <begin position="1"/>
        <end position="210"/>
    </location>
</feature>
<gene>
    <name evidence="1" type="primary">hisB</name>
    <name type="ordered locus">MRA_1611</name>
</gene>
<protein>
    <recommendedName>
        <fullName evidence="1">Imidazoleglycerol-phosphate dehydratase</fullName>
        <shortName evidence="1">IGPD</shortName>
        <ecNumber evidence="1">4.2.1.19</ecNumber>
    </recommendedName>
</protein>
<comment type="catalytic activity">
    <reaction evidence="1">
        <text>D-erythro-1-(imidazol-4-yl)glycerol 3-phosphate = 3-(imidazol-4-yl)-2-oxopropyl phosphate + H2O</text>
        <dbReference type="Rhea" id="RHEA:11040"/>
        <dbReference type="ChEBI" id="CHEBI:15377"/>
        <dbReference type="ChEBI" id="CHEBI:57766"/>
        <dbReference type="ChEBI" id="CHEBI:58278"/>
        <dbReference type="EC" id="4.2.1.19"/>
    </reaction>
</comment>
<comment type="pathway">
    <text evidence="1">Amino-acid biosynthesis; L-histidine biosynthesis; L-histidine from 5-phospho-alpha-D-ribose 1-diphosphate: step 6/9.</text>
</comment>
<comment type="subcellular location">
    <subcellularLocation>
        <location evidence="1">Cytoplasm</location>
    </subcellularLocation>
</comment>
<comment type="similarity">
    <text evidence="1">Belongs to the imidazoleglycerol-phosphate dehydratase family.</text>
</comment>
<organism>
    <name type="scientific">Mycobacterium tuberculosis (strain ATCC 25177 / H37Ra)</name>
    <dbReference type="NCBI Taxonomy" id="419947"/>
    <lineage>
        <taxon>Bacteria</taxon>
        <taxon>Bacillati</taxon>
        <taxon>Actinomycetota</taxon>
        <taxon>Actinomycetes</taxon>
        <taxon>Mycobacteriales</taxon>
        <taxon>Mycobacteriaceae</taxon>
        <taxon>Mycobacterium</taxon>
        <taxon>Mycobacterium tuberculosis complex</taxon>
    </lineage>
</organism>
<name>HIS7_MYCTA</name>
<reference key="1">
    <citation type="journal article" date="2008" name="PLoS ONE">
        <title>Genetic basis of virulence attenuation revealed by comparative genomic analysis of Mycobacterium tuberculosis strain H37Ra versus H37Rv.</title>
        <authorList>
            <person name="Zheng H."/>
            <person name="Lu L."/>
            <person name="Wang B."/>
            <person name="Pu S."/>
            <person name="Zhang X."/>
            <person name="Zhu G."/>
            <person name="Shi W."/>
            <person name="Zhang L."/>
            <person name="Wang H."/>
            <person name="Wang S."/>
            <person name="Zhao G."/>
            <person name="Zhang Y."/>
        </authorList>
    </citation>
    <scope>NUCLEOTIDE SEQUENCE [LARGE SCALE GENOMIC DNA]</scope>
    <source>
        <strain>ATCC 25177 / H37Ra</strain>
    </source>
</reference>
<sequence length="210" mass="22770">MTTTQTAKASRRARIERRTRESDIVIELDLDGTGQVAVDTGVPFYDHMLTALGSHASFDLTVRATGDVEIEAHHTIEDTAIALGTALGQALGDKRGIRRFGDAFIPMDETLAHAAVDLSGRPYCVHTGEPDHLQHTTIAGSSVPYHTVINRHVFESLAANARIALHVRVLYGRDPHHITEAQYKAVARALRQAVEPDPRVSGVPSTKGAL</sequence>
<evidence type="ECO:0000255" key="1">
    <source>
        <dbReference type="HAMAP-Rule" id="MF_00076"/>
    </source>
</evidence>